<name>NUOI_HALHL</name>
<evidence type="ECO:0000255" key="1">
    <source>
        <dbReference type="HAMAP-Rule" id="MF_01351"/>
    </source>
</evidence>
<comment type="function">
    <text evidence="1">NDH-1 shuttles electrons from NADH, via FMN and iron-sulfur (Fe-S) centers, to quinones in the respiratory chain. The immediate electron acceptor for the enzyme in this species is believed to be ubiquinone. Couples the redox reaction to proton translocation (for every two electrons transferred, four hydrogen ions are translocated across the cytoplasmic membrane), and thus conserves the redox energy in a proton gradient.</text>
</comment>
<comment type="catalytic activity">
    <reaction evidence="1">
        <text>a quinone + NADH + 5 H(+)(in) = a quinol + NAD(+) + 4 H(+)(out)</text>
        <dbReference type="Rhea" id="RHEA:57888"/>
        <dbReference type="ChEBI" id="CHEBI:15378"/>
        <dbReference type="ChEBI" id="CHEBI:24646"/>
        <dbReference type="ChEBI" id="CHEBI:57540"/>
        <dbReference type="ChEBI" id="CHEBI:57945"/>
        <dbReference type="ChEBI" id="CHEBI:132124"/>
    </reaction>
</comment>
<comment type="cofactor">
    <cofactor evidence="1">
        <name>[4Fe-4S] cluster</name>
        <dbReference type="ChEBI" id="CHEBI:49883"/>
    </cofactor>
    <text evidence="1">Binds 2 [4Fe-4S] clusters per subunit.</text>
</comment>
<comment type="subunit">
    <text evidence="1">NDH-1 is composed of 14 different subunits. Subunits NuoA, H, J, K, L, M, N constitute the membrane sector of the complex.</text>
</comment>
<comment type="subcellular location">
    <subcellularLocation>
        <location evidence="1">Cell inner membrane</location>
        <topology evidence="1">Peripheral membrane protein</topology>
    </subcellularLocation>
</comment>
<comment type="similarity">
    <text evidence="1">Belongs to the complex I 23 kDa subunit family.</text>
</comment>
<reference key="1">
    <citation type="submission" date="2006-12" db="EMBL/GenBank/DDBJ databases">
        <title>Complete sequence of Halorhodospira halophila SL1.</title>
        <authorList>
            <consortium name="US DOE Joint Genome Institute"/>
            <person name="Copeland A."/>
            <person name="Lucas S."/>
            <person name="Lapidus A."/>
            <person name="Barry K."/>
            <person name="Detter J.C."/>
            <person name="Glavina del Rio T."/>
            <person name="Hammon N."/>
            <person name="Israni S."/>
            <person name="Dalin E."/>
            <person name="Tice H."/>
            <person name="Pitluck S."/>
            <person name="Saunders E."/>
            <person name="Brettin T."/>
            <person name="Bruce D."/>
            <person name="Han C."/>
            <person name="Tapia R."/>
            <person name="Schmutz J."/>
            <person name="Larimer F."/>
            <person name="Land M."/>
            <person name="Hauser L."/>
            <person name="Kyrpides N."/>
            <person name="Mikhailova N."/>
            <person name="Hoff W."/>
            <person name="Richardson P."/>
        </authorList>
    </citation>
    <scope>NUCLEOTIDE SEQUENCE [LARGE SCALE GENOMIC DNA]</scope>
    <source>
        <strain>DSM 244 / SL1</strain>
    </source>
</reference>
<dbReference type="EC" id="7.1.1.-" evidence="1"/>
<dbReference type="EMBL" id="CP000544">
    <property type="protein sequence ID" value="ABM62521.1"/>
    <property type="molecule type" value="Genomic_DNA"/>
</dbReference>
<dbReference type="RefSeq" id="WP_011814543.1">
    <property type="nucleotide sequence ID" value="NC_008789.1"/>
</dbReference>
<dbReference type="SMR" id="A1WXV9"/>
<dbReference type="STRING" id="349124.Hhal_1757"/>
<dbReference type="KEGG" id="hha:Hhal_1757"/>
<dbReference type="eggNOG" id="COG1143">
    <property type="taxonomic scope" value="Bacteria"/>
</dbReference>
<dbReference type="HOGENOM" id="CLU_067218_5_1_6"/>
<dbReference type="OrthoDB" id="9808559at2"/>
<dbReference type="Proteomes" id="UP000000647">
    <property type="component" value="Chromosome"/>
</dbReference>
<dbReference type="GO" id="GO:0005886">
    <property type="term" value="C:plasma membrane"/>
    <property type="evidence" value="ECO:0007669"/>
    <property type="project" value="UniProtKB-SubCell"/>
</dbReference>
<dbReference type="GO" id="GO:0051539">
    <property type="term" value="F:4 iron, 4 sulfur cluster binding"/>
    <property type="evidence" value="ECO:0007669"/>
    <property type="project" value="UniProtKB-KW"/>
</dbReference>
<dbReference type="GO" id="GO:0005506">
    <property type="term" value="F:iron ion binding"/>
    <property type="evidence" value="ECO:0007669"/>
    <property type="project" value="UniProtKB-UniRule"/>
</dbReference>
<dbReference type="GO" id="GO:0050136">
    <property type="term" value="F:NADH:ubiquinone reductase (non-electrogenic) activity"/>
    <property type="evidence" value="ECO:0007669"/>
    <property type="project" value="UniProtKB-UniRule"/>
</dbReference>
<dbReference type="GO" id="GO:0048038">
    <property type="term" value="F:quinone binding"/>
    <property type="evidence" value="ECO:0007669"/>
    <property type="project" value="UniProtKB-KW"/>
</dbReference>
<dbReference type="GO" id="GO:0009060">
    <property type="term" value="P:aerobic respiration"/>
    <property type="evidence" value="ECO:0007669"/>
    <property type="project" value="TreeGrafter"/>
</dbReference>
<dbReference type="FunFam" id="3.30.70.3270:FF:000003">
    <property type="entry name" value="NADH-quinone oxidoreductase subunit I"/>
    <property type="match status" value="1"/>
</dbReference>
<dbReference type="Gene3D" id="3.30.70.3270">
    <property type="match status" value="1"/>
</dbReference>
<dbReference type="HAMAP" id="MF_01351">
    <property type="entry name" value="NDH1_NuoI"/>
    <property type="match status" value="1"/>
</dbReference>
<dbReference type="InterPro" id="IPR017896">
    <property type="entry name" value="4Fe4S_Fe-S-bd"/>
</dbReference>
<dbReference type="InterPro" id="IPR017900">
    <property type="entry name" value="4Fe4S_Fe_S_CS"/>
</dbReference>
<dbReference type="InterPro" id="IPR010226">
    <property type="entry name" value="NADH_quinone_OxRdtase_chainI"/>
</dbReference>
<dbReference type="NCBIfam" id="TIGR01971">
    <property type="entry name" value="NuoI"/>
    <property type="match status" value="1"/>
</dbReference>
<dbReference type="NCBIfam" id="NF004538">
    <property type="entry name" value="PRK05888.1-4"/>
    <property type="match status" value="1"/>
</dbReference>
<dbReference type="PANTHER" id="PTHR10849:SF20">
    <property type="entry name" value="NADH DEHYDROGENASE [UBIQUINONE] IRON-SULFUR PROTEIN 8, MITOCHONDRIAL"/>
    <property type="match status" value="1"/>
</dbReference>
<dbReference type="PANTHER" id="PTHR10849">
    <property type="entry name" value="NADH DEHYDROGENASE UBIQUINONE IRON-SULFUR PROTEIN 8, MITOCHONDRIAL"/>
    <property type="match status" value="1"/>
</dbReference>
<dbReference type="Pfam" id="PF12838">
    <property type="entry name" value="Fer4_7"/>
    <property type="match status" value="1"/>
</dbReference>
<dbReference type="SUPFAM" id="SSF54862">
    <property type="entry name" value="4Fe-4S ferredoxins"/>
    <property type="match status" value="1"/>
</dbReference>
<dbReference type="PROSITE" id="PS00198">
    <property type="entry name" value="4FE4S_FER_1"/>
    <property type="match status" value="2"/>
</dbReference>
<dbReference type="PROSITE" id="PS51379">
    <property type="entry name" value="4FE4S_FER_2"/>
    <property type="match status" value="2"/>
</dbReference>
<organism>
    <name type="scientific">Halorhodospira halophila (strain DSM 244 / SL1)</name>
    <name type="common">Ectothiorhodospira halophila (strain DSM 244 / SL1)</name>
    <dbReference type="NCBI Taxonomy" id="349124"/>
    <lineage>
        <taxon>Bacteria</taxon>
        <taxon>Pseudomonadati</taxon>
        <taxon>Pseudomonadota</taxon>
        <taxon>Gammaproteobacteria</taxon>
        <taxon>Chromatiales</taxon>
        <taxon>Ectothiorhodospiraceae</taxon>
        <taxon>Halorhodospira</taxon>
    </lineage>
</organism>
<feature type="chain" id="PRO_0000298501" description="NADH-quinone oxidoreductase subunit I">
    <location>
        <begin position="1"/>
        <end position="163"/>
    </location>
</feature>
<feature type="domain" description="4Fe-4S ferredoxin-type 1" evidence="1">
    <location>
        <begin position="54"/>
        <end position="84"/>
    </location>
</feature>
<feature type="domain" description="4Fe-4S ferredoxin-type 2" evidence="1">
    <location>
        <begin position="94"/>
        <end position="123"/>
    </location>
</feature>
<feature type="binding site" evidence="1">
    <location>
        <position position="64"/>
    </location>
    <ligand>
        <name>[4Fe-4S] cluster</name>
        <dbReference type="ChEBI" id="CHEBI:49883"/>
        <label>1</label>
    </ligand>
</feature>
<feature type="binding site" evidence="1">
    <location>
        <position position="67"/>
    </location>
    <ligand>
        <name>[4Fe-4S] cluster</name>
        <dbReference type="ChEBI" id="CHEBI:49883"/>
        <label>1</label>
    </ligand>
</feature>
<feature type="binding site" evidence="1">
    <location>
        <position position="70"/>
    </location>
    <ligand>
        <name>[4Fe-4S] cluster</name>
        <dbReference type="ChEBI" id="CHEBI:49883"/>
        <label>1</label>
    </ligand>
</feature>
<feature type="binding site" evidence="1">
    <location>
        <position position="74"/>
    </location>
    <ligand>
        <name>[4Fe-4S] cluster</name>
        <dbReference type="ChEBI" id="CHEBI:49883"/>
        <label>2</label>
    </ligand>
</feature>
<feature type="binding site" evidence="1">
    <location>
        <position position="103"/>
    </location>
    <ligand>
        <name>[4Fe-4S] cluster</name>
        <dbReference type="ChEBI" id="CHEBI:49883"/>
        <label>2</label>
    </ligand>
</feature>
<feature type="binding site" evidence="1">
    <location>
        <position position="106"/>
    </location>
    <ligand>
        <name>[4Fe-4S] cluster</name>
        <dbReference type="ChEBI" id="CHEBI:49883"/>
        <label>2</label>
    </ligand>
</feature>
<feature type="binding site" evidence="1">
    <location>
        <position position="109"/>
    </location>
    <ligand>
        <name>[4Fe-4S] cluster</name>
        <dbReference type="ChEBI" id="CHEBI:49883"/>
        <label>2</label>
    </ligand>
</feature>
<feature type="binding site" evidence="1">
    <location>
        <position position="113"/>
    </location>
    <ligand>
        <name>[4Fe-4S] cluster</name>
        <dbReference type="ChEBI" id="CHEBI:49883"/>
        <label>1</label>
    </ligand>
</feature>
<sequence>MRPLNDYLNSFLFTELLRGLRLTARHMVFRRSITLEFPEERAPKSPRFRGHLALRRYPNGEERCIACKLCEAVCPALAITIDSHQRADGTRRTTRYDIDMFKCIYCGFCEESCPVDSIVLTRLDTFHMERRDERVADKQKLLAMGDKYESQLAADRAADAPYR</sequence>
<accession>A1WXV9</accession>
<gene>
    <name evidence="1" type="primary">nuoI</name>
    <name type="ordered locus">Hhal_1757</name>
</gene>
<keyword id="KW-0004">4Fe-4S</keyword>
<keyword id="KW-0997">Cell inner membrane</keyword>
<keyword id="KW-1003">Cell membrane</keyword>
<keyword id="KW-0408">Iron</keyword>
<keyword id="KW-0411">Iron-sulfur</keyword>
<keyword id="KW-0472">Membrane</keyword>
<keyword id="KW-0479">Metal-binding</keyword>
<keyword id="KW-0520">NAD</keyword>
<keyword id="KW-0874">Quinone</keyword>
<keyword id="KW-1185">Reference proteome</keyword>
<keyword id="KW-0677">Repeat</keyword>
<keyword id="KW-1278">Translocase</keyword>
<keyword id="KW-0830">Ubiquinone</keyword>
<protein>
    <recommendedName>
        <fullName evidence="1">NADH-quinone oxidoreductase subunit I</fullName>
        <ecNumber evidence="1">7.1.1.-</ecNumber>
    </recommendedName>
    <alternativeName>
        <fullName evidence="1">NADH dehydrogenase I subunit I</fullName>
    </alternativeName>
    <alternativeName>
        <fullName evidence="1">NDH-1 subunit I</fullName>
    </alternativeName>
</protein>
<proteinExistence type="inferred from homology"/>